<evidence type="ECO:0000255" key="1">
    <source>
        <dbReference type="PROSITE-ProRule" id="PRU00094"/>
    </source>
</evidence>
<evidence type="ECO:0000256" key="2">
    <source>
        <dbReference type="SAM" id="MobiDB-lite"/>
    </source>
</evidence>
<proteinExistence type="predicted"/>
<gene>
    <name type="primary">gtaO</name>
    <name type="ORF">DDB_G0289651</name>
</gene>
<accession>Q54HA4</accession>
<name>GTAO_DICDI</name>
<sequence length="511" mass="58840">TNNNNFNNINNNNNNNNNNNNNNNNNNNNNNNNNNNSNNNNNNNNNYNSNNNNNNNNNNNNNNNNNNNNNNNNNNNNNNNNNNNNNNNNNNNNNNNNNNTSFNDNCNNNSNYHNHSNHHPLFESLQNINQYPLSPNNNKSSNQHLSHSSSNVNSQYYQTPYYQPSQKQNSPNSTPPLNGCQYENHNLNSNNTFFKKNTNHYISQQLYQQQFNQNVNNNNNNNNISNNNNNSYNINCNNNNNNNNSNYNNNSYNNNNNYNNNNNNNNNNNNNNNNNNNNNNIFNENNNNNNNNNNNNNNNCNNNYNNNDNNENKYCVPKIEIPQKNLQYSPPPFQLDSGSTTPKTPSAPTSPVLSPKTSNKICDLVLNIVPICQELSNEDGYQNKELLNKIQEYFEDAIREIKKIKKTRLPLMKQNHTKESDDKTFYSLRPRRNRKCTIKTKTLQSSNSEEIVCQACGTRASPEWRKGPDGFKSLCNACGLYYAKTKKRENEIIGQPDLIPKHMKIHNLIND</sequence>
<reference key="1">
    <citation type="journal article" date="2005" name="Nature">
        <title>The genome of the social amoeba Dictyostelium discoideum.</title>
        <authorList>
            <person name="Eichinger L."/>
            <person name="Pachebat J.A."/>
            <person name="Gloeckner G."/>
            <person name="Rajandream M.A."/>
            <person name="Sucgang R."/>
            <person name="Berriman M."/>
            <person name="Song J."/>
            <person name="Olsen R."/>
            <person name="Szafranski K."/>
            <person name="Xu Q."/>
            <person name="Tunggal B."/>
            <person name="Kummerfeld S."/>
            <person name="Madera M."/>
            <person name="Konfortov B.A."/>
            <person name="Rivero F."/>
            <person name="Bankier A.T."/>
            <person name="Lehmann R."/>
            <person name="Hamlin N."/>
            <person name="Davies R."/>
            <person name="Gaudet P."/>
            <person name="Fey P."/>
            <person name="Pilcher K."/>
            <person name="Chen G."/>
            <person name="Saunders D."/>
            <person name="Sodergren E.J."/>
            <person name="Davis P."/>
            <person name="Kerhornou A."/>
            <person name="Nie X."/>
            <person name="Hall N."/>
            <person name="Anjard C."/>
            <person name="Hemphill L."/>
            <person name="Bason N."/>
            <person name="Farbrother P."/>
            <person name="Desany B."/>
            <person name="Just E."/>
            <person name="Morio T."/>
            <person name="Rost R."/>
            <person name="Churcher C.M."/>
            <person name="Cooper J."/>
            <person name="Haydock S."/>
            <person name="van Driessche N."/>
            <person name="Cronin A."/>
            <person name="Goodhead I."/>
            <person name="Muzny D.M."/>
            <person name="Mourier T."/>
            <person name="Pain A."/>
            <person name="Lu M."/>
            <person name="Harper D."/>
            <person name="Lindsay R."/>
            <person name="Hauser H."/>
            <person name="James K.D."/>
            <person name="Quiles M."/>
            <person name="Madan Babu M."/>
            <person name="Saito T."/>
            <person name="Buchrieser C."/>
            <person name="Wardroper A."/>
            <person name="Felder M."/>
            <person name="Thangavelu M."/>
            <person name="Johnson D."/>
            <person name="Knights A."/>
            <person name="Loulseged H."/>
            <person name="Mungall K.L."/>
            <person name="Oliver K."/>
            <person name="Price C."/>
            <person name="Quail M.A."/>
            <person name="Urushihara H."/>
            <person name="Hernandez J."/>
            <person name="Rabbinowitsch E."/>
            <person name="Steffen D."/>
            <person name="Sanders M."/>
            <person name="Ma J."/>
            <person name="Kohara Y."/>
            <person name="Sharp S."/>
            <person name="Simmonds M.N."/>
            <person name="Spiegler S."/>
            <person name="Tivey A."/>
            <person name="Sugano S."/>
            <person name="White B."/>
            <person name="Walker D."/>
            <person name="Woodward J.R."/>
            <person name="Winckler T."/>
            <person name="Tanaka Y."/>
            <person name="Shaulsky G."/>
            <person name="Schleicher M."/>
            <person name="Weinstock G.M."/>
            <person name="Rosenthal A."/>
            <person name="Cox E.C."/>
            <person name="Chisholm R.L."/>
            <person name="Gibbs R.A."/>
            <person name="Loomis W.F."/>
            <person name="Platzer M."/>
            <person name="Kay R.R."/>
            <person name="Williams J.G."/>
            <person name="Dear P.H."/>
            <person name="Noegel A.A."/>
            <person name="Barrell B.G."/>
            <person name="Kuspa A."/>
        </authorList>
    </citation>
    <scope>NUCLEOTIDE SEQUENCE [LARGE SCALE GENOMIC DNA]</scope>
    <source>
        <strain>AX4</strain>
    </source>
</reference>
<feature type="chain" id="PRO_0000330448" description="GATA zinc finger domain-containing protein 15">
    <location>
        <begin position="1" status="less than"/>
        <end position="511"/>
    </location>
</feature>
<feature type="zinc finger region" description="GATA-type" evidence="1">
    <location>
        <begin position="453"/>
        <end position="478"/>
    </location>
</feature>
<feature type="region of interest" description="Disordered" evidence="2">
    <location>
        <begin position="1"/>
        <end position="194"/>
    </location>
</feature>
<feature type="region of interest" description="Disordered" evidence="2">
    <location>
        <begin position="214"/>
        <end position="313"/>
    </location>
</feature>
<feature type="region of interest" description="Disordered" evidence="2">
    <location>
        <begin position="325"/>
        <end position="355"/>
    </location>
</feature>
<feature type="compositionally biased region" description="Low complexity" evidence="2">
    <location>
        <begin position="1"/>
        <end position="111"/>
    </location>
</feature>
<feature type="compositionally biased region" description="Polar residues" evidence="2">
    <location>
        <begin position="124"/>
        <end position="135"/>
    </location>
</feature>
<feature type="compositionally biased region" description="Low complexity" evidence="2">
    <location>
        <begin position="136"/>
        <end position="166"/>
    </location>
</feature>
<feature type="compositionally biased region" description="Polar residues" evidence="2">
    <location>
        <begin position="167"/>
        <end position="185"/>
    </location>
</feature>
<feature type="compositionally biased region" description="Low complexity" evidence="2">
    <location>
        <begin position="214"/>
        <end position="309"/>
    </location>
</feature>
<feature type="compositionally biased region" description="Low complexity" evidence="2">
    <location>
        <begin position="337"/>
        <end position="351"/>
    </location>
</feature>
<feature type="non-terminal residue">
    <location>
        <position position="1"/>
    </location>
</feature>
<protein>
    <recommendedName>
        <fullName>GATA zinc finger domain-containing protein 15</fullName>
    </recommendedName>
</protein>
<organism>
    <name type="scientific">Dictyostelium discoideum</name>
    <name type="common">Social amoeba</name>
    <dbReference type="NCBI Taxonomy" id="44689"/>
    <lineage>
        <taxon>Eukaryota</taxon>
        <taxon>Amoebozoa</taxon>
        <taxon>Evosea</taxon>
        <taxon>Eumycetozoa</taxon>
        <taxon>Dictyostelia</taxon>
        <taxon>Dictyosteliales</taxon>
        <taxon>Dictyosteliaceae</taxon>
        <taxon>Dictyostelium</taxon>
    </lineage>
</organism>
<dbReference type="EMBL" id="AAFI02000147">
    <property type="protein sequence ID" value="EAL62643.1"/>
    <property type="molecule type" value="Genomic_DNA"/>
</dbReference>
<dbReference type="RefSeq" id="XP_636120.1">
    <property type="nucleotide sequence ID" value="XM_631028.1"/>
</dbReference>
<dbReference type="SMR" id="Q54HA4"/>
<dbReference type="PaxDb" id="44689-DDB0233420"/>
<dbReference type="EnsemblProtists" id="EAL62643">
    <property type="protein sequence ID" value="EAL62643"/>
    <property type="gene ID" value="DDB_G0289651"/>
</dbReference>
<dbReference type="GeneID" id="8627223"/>
<dbReference type="KEGG" id="ddi:DDB_G0289651"/>
<dbReference type="dictyBase" id="DDB_G0289651">
    <property type="gene designation" value="gtaO"/>
</dbReference>
<dbReference type="VEuPathDB" id="AmoebaDB:DDB_G0289651"/>
<dbReference type="eggNOG" id="KOG1601">
    <property type="taxonomic scope" value="Eukaryota"/>
</dbReference>
<dbReference type="HOGENOM" id="CLU_533825_0_0_1"/>
<dbReference type="InParanoid" id="Q54HA4"/>
<dbReference type="OMA" id="NDNCNTH"/>
<dbReference type="Proteomes" id="UP000002195">
    <property type="component" value="Chromosome 5"/>
</dbReference>
<dbReference type="GO" id="GO:0043565">
    <property type="term" value="F:sequence-specific DNA binding"/>
    <property type="evidence" value="ECO:0007669"/>
    <property type="project" value="InterPro"/>
</dbReference>
<dbReference type="GO" id="GO:0008270">
    <property type="term" value="F:zinc ion binding"/>
    <property type="evidence" value="ECO:0007669"/>
    <property type="project" value="UniProtKB-KW"/>
</dbReference>
<dbReference type="GO" id="GO:0006355">
    <property type="term" value="P:regulation of DNA-templated transcription"/>
    <property type="evidence" value="ECO:0007669"/>
    <property type="project" value="InterPro"/>
</dbReference>
<dbReference type="CDD" id="cd00202">
    <property type="entry name" value="ZnF_GATA"/>
    <property type="match status" value="1"/>
</dbReference>
<dbReference type="Gene3D" id="3.30.50.10">
    <property type="entry name" value="Erythroid Transcription Factor GATA-1, subunit A"/>
    <property type="match status" value="1"/>
</dbReference>
<dbReference type="InterPro" id="IPR052138">
    <property type="entry name" value="GATA_ZnFinger_Domain"/>
</dbReference>
<dbReference type="InterPro" id="IPR000679">
    <property type="entry name" value="Znf_GATA"/>
</dbReference>
<dbReference type="InterPro" id="IPR013088">
    <property type="entry name" value="Znf_NHR/GATA"/>
</dbReference>
<dbReference type="PANTHER" id="PTHR47255">
    <property type="entry name" value="GATA TRANSCRIPTION FACTOR 22-RELATED"/>
    <property type="match status" value="1"/>
</dbReference>
<dbReference type="PANTHER" id="PTHR47255:SF4">
    <property type="entry name" value="GATA ZINC FINGER DOMAIN-CONTAINING PROTEIN 12"/>
    <property type="match status" value="1"/>
</dbReference>
<dbReference type="Pfam" id="PF00320">
    <property type="entry name" value="GATA"/>
    <property type="match status" value="1"/>
</dbReference>
<dbReference type="SMART" id="SM00401">
    <property type="entry name" value="ZnF_GATA"/>
    <property type="match status" value="1"/>
</dbReference>
<dbReference type="SUPFAM" id="SSF57716">
    <property type="entry name" value="Glucocorticoid receptor-like (DNA-binding domain)"/>
    <property type="match status" value="1"/>
</dbReference>
<dbReference type="PROSITE" id="PS50114">
    <property type="entry name" value="GATA_ZN_FINGER_2"/>
    <property type="match status" value="1"/>
</dbReference>
<keyword id="KW-0479">Metal-binding</keyword>
<keyword id="KW-1185">Reference proteome</keyword>
<keyword id="KW-0862">Zinc</keyword>
<keyword id="KW-0863">Zinc-finger</keyword>